<comment type="function">
    <text evidence="2 3">Negatively regulates the transcription of the lutABC operon, which is required for L-lactate utilization. LutR activity is regulated by lactate, since presence of L-lactate, that probably binds to LutR, leads to derepression of the operon. Also appears to be essential for bacilysin biosynthesis.</text>
</comment>
<comment type="disruption phenotype">
    <text evidence="2 3">Cells lacking this gene show a derepression of lutABC expression. They are also defective in bacilysin production.</text>
</comment>
<dbReference type="EMBL" id="Z94043">
    <property type="protein sequence ID" value="CAB08003.1"/>
    <property type="molecule type" value="Genomic_DNA"/>
</dbReference>
<dbReference type="EMBL" id="AL009126">
    <property type="protein sequence ID" value="CAB15423.2"/>
    <property type="molecule type" value="Genomic_DNA"/>
</dbReference>
<dbReference type="PIR" id="B70038">
    <property type="entry name" value="B70038"/>
</dbReference>
<dbReference type="RefSeq" id="NP_391298.2">
    <property type="nucleotide sequence ID" value="NC_000964.3"/>
</dbReference>
<dbReference type="RefSeq" id="WP_009968191.1">
    <property type="nucleotide sequence ID" value="NC_000964.3"/>
</dbReference>
<dbReference type="SMR" id="O07007"/>
<dbReference type="FunCoup" id="O07007">
    <property type="interactions" value="168"/>
</dbReference>
<dbReference type="STRING" id="224308.BSU34180"/>
<dbReference type="PaxDb" id="224308-BSU34180"/>
<dbReference type="EnsemblBacteria" id="CAB15423">
    <property type="protein sequence ID" value="CAB15423"/>
    <property type="gene ID" value="BSU_34180"/>
</dbReference>
<dbReference type="GeneID" id="936332"/>
<dbReference type="KEGG" id="bsu:BSU34180"/>
<dbReference type="PATRIC" id="fig|224308.179.peg.3705"/>
<dbReference type="eggNOG" id="COG2186">
    <property type="taxonomic scope" value="Bacteria"/>
</dbReference>
<dbReference type="InParanoid" id="O07007"/>
<dbReference type="OrthoDB" id="9782299at2"/>
<dbReference type="PhylomeDB" id="O07007"/>
<dbReference type="BioCyc" id="BSUB:BSU34180-MONOMER"/>
<dbReference type="Proteomes" id="UP000001570">
    <property type="component" value="Chromosome"/>
</dbReference>
<dbReference type="GO" id="GO:0003677">
    <property type="term" value="F:DNA binding"/>
    <property type="evidence" value="ECO:0007669"/>
    <property type="project" value="UniProtKB-KW"/>
</dbReference>
<dbReference type="GO" id="GO:0003700">
    <property type="term" value="F:DNA-binding transcription factor activity"/>
    <property type="evidence" value="ECO:0007669"/>
    <property type="project" value="InterPro"/>
</dbReference>
<dbReference type="CDD" id="cd07377">
    <property type="entry name" value="WHTH_GntR"/>
    <property type="match status" value="1"/>
</dbReference>
<dbReference type="Gene3D" id="1.20.120.530">
    <property type="entry name" value="GntR ligand-binding domain-like"/>
    <property type="match status" value="1"/>
</dbReference>
<dbReference type="Gene3D" id="1.10.10.10">
    <property type="entry name" value="Winged helix-like DNA-binding domain superfamily/Winged helix DNA-binding domain"/>
    <property type="match status" value="1"/>
</dbReference>
<dbReference type="InterPro" id="IPR011711">
    <property type="entry name" value="GntR_C"/>
</dbReference>
<dbReference type="InterPro" id="IPR008920">
    <property type="entry name" value="TF_FadR/GntR_C"/>
</dbReference>
<dbReference type="InterPro" id="IPR000524">
    <property type="entry name" value="Tscrpt_reg_HTH_GntR"/>
</dbReference>
<dbReference type="InterPro" id="IPR036388">
    <property type="entry name" value="WH-like_DNA-bd_sf"/>
</dbReference>
<dbReference type="InterPro" id="IPR036390">
    <property type="entry name" value="WH_DNA-bd_sf"/>
</dbReference>
<dbReference type="PANTHER" id="PTHR43537">
    <property type="entry name" value="TRANSCRIPTIONAL REGULATOR, GNTR FAMILY"/>
    <property type="match status" value="1"/>
</dbReference>
<dbReference type="PANTHER" id="PTHR43537:SF5">
    <property type="entry name" value="UXU OPERON TRANSCRIPTIONAL REGULATOR"/>
    <property type="match status" value="1"/>
</dbReference>
<dbReference type="Pfam" id="PF07729">
    <property type="entry name" value="FCD"/>
    <property type="match status" value="1"/>
</dbReference>
<dbReference type="Pfam" id="PF00392">
    <property type="entry name" value="GntR"/>
    <property type="match status" value="1"/>
</dbReference>
<dbReference type="PRINTS" id="PR00035">
    <property type="entry name" value="HTHGNTR"/>
</dbReference>
<dbReference type="SMART" id="SM00895">
    <property type="entry name" value="FCD"/>
    <property type="match status" value="1"/>
</dbReference>
<dbReference type="SMART" id="SM00345">
    <property type="entry name" value="HTH_GNTR"/>
    <property type="match status" value="1"/>
</dbReference>
<dbReference type="SUPFAM" id="SSF48008">
    <property type="entry name" value="GntR ligand-binding domain-like"/>
    <property type="match status" value="1"/>
</dbReference>
<dbReference type="SUPFAM" id="SSF46785">
    <property type="entry name" value="Winged helix' DNA-binding domain"/>
    <property type="match status" value="1"/>
</dbReference>
<dbReference type="PROSITE" id="PS50949">
    <property type="entry name" value="HTH_GNTR"/>
    <property type="match status" value="1"/>
</dbReference>
<feature type="chain" id="PRO_0000383956" description="HTH-type transcriptional regulator LutR">
    <location>
        <begin position="1"/>
        <end position="219"/>
    </location>
</feature>
<feature type="domain" description="HTH gntR-type" evidence="1">
    <location>
        <begin position="1"/>
        <end position="56"/>
    </location>
</feature>
<feature type="DNA-binding region" description="H-T-H motif" evidence="1">
    <location>
        <begin position="16"/>
        <end position="35"/>
    </location>
</feature>
<name>LUTR_BACSU</name>
<keyword id="KW-0238">DNA-binding</keyword>
<keyword id="KW-1185">Reference proteome</keyword>
<keyword id="KW-0678">Repressor</keyword>
<keyword id="KW-0804">Transcription</keyword>
<keyword id="KW-0805">Transcription regulation</keyword>
<organism>
    <name type="scientific">Bacillus subtilis (strain 168)</name>
    <dbReference type="NCBI Taxonomy" id="224308"/>
    <lineage>
        <taxon>Bacteria</taxon>
        <taxon>Bacillati</taxon>
        <taxon>Bacillota</taxon>
        <taxon>Bacilli</taxon>
        <taxon>Bacillales</taxon>
        <taxon>Bacillaceae</taxon>
        <taxon>Bacillus</taxon>
    </lineage>
</organism>
<sequence>MIKNGELKPGDKLDSVQALAESFQVSRSAVREALSALKAMGLVEMKQGEGTYLKEFELNQISQPLSAALLMKKEDVKQLLEVRKLLEIGVASLAAEKRTEADLERIQDALKEMGSIEADGELGEKADFAFHLALADASQNELLKHLMNHVSSLLLETMRETRKIWLFSKKTSVQRLYEEHERIYNAVAAGNGAQAEAAMLAHLTNVEDVLSGYFEENVQ</sequence>
<evidence type="ECO:0000255" key="1">
    <source>
        <dbReference type="PROSITE-ProRule" id="PRU00307"/>
    </source>
</evidence>
<evidence type="ECO:0000269" key="2">
    <source>
    </source>
</evidence>
<evidence type="ECO:0000269" key="3">
    <source>
    </source>
</evidence>
<accession>O07007</accession>
<accession>Q795J5</accession>
<proteinExistence type="evidence at protein level"/>
<reference key="1">
    <citation type="submission" date="1997-04" db="EMBL/GenBank/DDBJ databases">
        <authorList>
            <person name="Denizot F."/>
        </authorList>
    </citation>
    <scope>NUCLEOTIDE SEQUENCE [GENOMIC DNA]</scope>
    <source>
        <strain>168</strain>
    </source>
</reference>
<reference key="2">
    <citation type="journal article" date="1997" name="Nature">
        <title>The complete genome sequence of the Gram-positive bacterium Bacillus subtilis.</title>
        <authorList>
            <person name="Kunst F."/>
            <person name="Ogasawara N."/>
            <person name="Moszer I."/>
            <person name="Albertini A.M."/>
            <person name="Alloni G."/>
            <person name="Azevedo V."/>
            <person name="Bertero M.G."/>
            <person name="Bessieres P."/>
            <person name="Bolotin A."/>
            <person name="Borchert S."/>
            <person name="Borriss R."/>
            <person name="Boursier L."/>
            <person name="Brans A."/>
            <person name="Braun M."/>
            <person name="Brignell S.C."/>
            <person name="Bron S."/>
            <person name="Brouillet S."/>
            <person name="Bruschi C.V."/>
            <person name="Caldwell B."/>
            <person name="Capuano V."/>
            <person name="Carter N.M."/>
            <person name="Choi S.-K."/>
            <person name="Codani J.-J."/>
            <person name="Connerton I.F."/>
            <person name="Cummings N.J."/>
            <person name="Daniel R.A."/>
            <person name="Denizot F."/>
            <person name="Devine K.M."/>
            <person name="Duesterhoeft A."/>
            <person name="Ehrlich S.D."/>
            <person name="Emmerson P.T."/>
            <person name="Entian K.-D."/>
            <person name="Errington J."/>
            <person name="Fabret C."/>
            <person name="Ferrari E."/>
            <person name="Foulger D."/>
            <person name="Fritz C."/>
            <person name="Fujita M."/>
            <person name="Fujita Y."/>
            <person name="Fuma S."/>
            <person name="Galizzi A."/>
            <person name="Galleron N."/>
            <person name="Ghim S.-Y."/>
            <person name="Glaser P."/>
            <person name="Goffeau A."/>
            <person name="Golightly E.J."/>
            <person name="Grandi G."/>
            <person name="Guiseppi G."/>
            <person name="Guy B.J."/>
            <person name="Haga K."/>
            <person name="Haiech J."/>
            <person name="Harwood C.R."/>
            <person name="Henaut A."/>
            <person name="Hilbert H."/>
            <person name="Holsappel S."/>
            <person name="Hosono S."/>
            <person name="Hullo M.-F."/>
            <person name="Itaya M."/>
            <person name="Jones L.-M."/>
            <person name="Joris B."/>
            <person name="Karamata D."/>
            <person name="Kasahara Y."/>
            <person name="Klaerr-Blanchard M."/>
            <person name="Klein C."/>
            <person name="Kobayashi Y."/>
            <person name="Koetter P."/>
            <person name="Koningstein G."/>
            <person name="Krogh S."/>
            <person name="Kumano M."/>
            <person name="Kurita K."/>
            <person name="Lapidus A."/>
            <person name="Lardinois S."/>
            <person name="Lauber J."/>
            <person name="Lazarevic V."/>
            <person name="Lee S.-M."/>
            <person name="Levine A."/>
            <person name="Liu H."/>
            <person name="Masuda S."/>
            <person name="Mauel C."/>
            <person name="Medigue C."/>
            <person name="Medina N."/>
            <person name="Mellado R.P."/>
            <person name="Mizuno M."/>
            <person name="Moestl D."/>
            <person name="Nakai S."/>
            <person name="Noback M."/>
            <person name="Noone D."/>
            <person name="O'Reilly M."/>
            <person name="Ogawa K."/>
            <person name="Ogiwara A."/>
            <person name="Oudega B."/>
            <person name="Park S.-H."/>
            <person name="Parro V."/>
            <person name="Pohl T.M."/>
            <person name="Portetelle D."/>
            <person name="Porwollik S."/>
            <person name="Prescott A.M."/>
            <person name="Presecan E."/>
            <person name="Pujic P."/>
            <person name="Purnelle B."/>
            <person name="Rapoport G."/>
            <person name="Rey M."/>
            <person name="Reynolds S."/>
            <person name="Rieger M."/>
            <person name="Rivolta C."/>
            <person name="Rocha E."/>
            <person name="Roche B."/>
            <person name="Rose M."/>
            <person name="Sadaie Y."/>
            <person name="Sato T."/>
            <person name="Scanlan E."/>
            <person name="Schleich S."/>
            <person name="Schroeter R."/>
            <person name="Scoffone F."/>
            <person name="Sekiguchi J."/>
            <person name="Sekowska A."/>
            <person name="Seror S.J."/>
            <person name="Serror P."/>
            <person name="Shin B.-S."/>
            <person name="Soldo B."/>
            <person name="Sorokin A."/>
            <person name="Tacconi E."/>
            <person name="Takagi T."/>
            <person name="Takahashi H."/>
            <person name="Takemaru K."/>
            <person name="Takeuchi M."/>
            <person name="Tamakoshi A."/>
            <person name="Tanaka T."/>
            <person name="Terpstra P."/>
            <person name="Tognoni A."/>
            <person name="Tosato V."/>
            <person name="Uchiyama S."/>
            <person name="Vandenbol M."/>
            <person name="Vannier F."/>
            <person name="Vassarotti A."/>
            <person name="Viari A."/>
            <person name="Wambutt R."/>
            <person name="Wedler E."/>
            <person name="Wedler H."/>
            <person name="Weitzenegger T."/>
            <person name="Winters P."/>
            <person name="Wipat A."/>
            <person name="Yamamoto H."/>
            <person name="Yamane K."/>
            <person name="Yasumoto K."/>
            <person name="Yata K."/>
            <person name="Yoshida K."/>
            <person name="Yoshikawa H.-F."/>
            <person name="Zumstein E."/>
            <person name="Yoshikawa H."/>
            <person name="Danchin A."/>
        </authorList>
    </citation>
    <scope>NUCLEOTIDE SEQUENCE [LARGE SCALE GENOMIC DNA]</scope>
    <source>
        <strain>168</strain>
    </source>
</reference>
<reference key="3">
    <citation type="journal article" date="2008" name="Antonie Van Leeuwenhoek">
        <title>The novel gene yvfI in Bacillus subtilis is essential for bacilysin biosynthesis.</title>
        <authorList>
            <person name="Koeroglu T.E."/>
            <person name="Kurt-Guer G."/>
            <person name="Uenlue E.C."/>
            <person name="Yazgan-Karatas A."/>
        </authorList>
    </citation>
    <scope>ROLE IN BACILYSIN BIOSYNTHESIS</scope>
    <scope>DISRUPTION PHENOTYPE</scope>
    <source>
        <strain>168 / PY79</strain>
    </source>
</reference>
<reference key="4">
    <citation type="journal article" date="2009" name="J. Bacteriol.">
        <title>A widely conserved gene cluster required for lactate utilization in Bacillus subtilis and its involvement in biofilm formation.</title>
        <authorList>
            <person name="Chai Y."/>
            <person name="Kolter R."/>
            <person name="Losick R."/>
        </authorList>
    </citation>
    <scope>FUNCTION AS A REPRESSOR OF LACTATE UTILIZATION OPERON</scope>
    <scope>DISRUPTION PHENOTYPE</scope>
    <source>
        <strain>3610</strain>
    </source>
</reference>
<gene>
    <name type="primary">lutR</name>
    <name type="synonym">yvfI</name>
    <name type="ordered locus">BSU34180</name>
</gene>
<protein>
    <recommendedName>
        <fullName>HTH-type transcriptional regulator LutR</fullName>
    </recommendedName>
    <alternativeName>
        <fullName>L-lactate utilization operon repressor</fullName>
    </alternativeName>
</protein>